<proteinExistence type="predicted"/>
<gene>
    <name type="ordered locus">jhp_0507</name>
</gene>
<accession>P64662</accession>
<accession>O25285</accession>
<comment type="subcellular location">
    <subcellularLocation>
        <location evidence="2">Membrane</location>
        <topology evidence="2">Single-pass membrane protein</topology>
    </subcellularLocation>
</comment>
<keyword id="KW-0472">Membrane</keyword>
<keyword id="KW-0812">Transmembrane</keyword>
<keyword id="KW-1133">Transmembrane helix</keyword>
<protein>
    <recommendedName>
        <fullName>Uncharacterized protein jhp_0507</fullName>
    </recommendedName>
</protein>
<sequence length="26" mass="3169">MGIIYLILFLIVIYLLYRILDVLEQK</sequence>
<organism>
    <name type="scientific">Helicobacter pylori (strain J99 / ATCC 700824)</name>
    <name type="common">Campylobacter pylori J99</name>
    <dbReference type="NCBI Taxonomy" id="85963"/>
    <lineage>
        <taxon>Bacteria</taxon>
        <taxon>Pseudomonadati</taxon>
        <taxon>Campylobacterota</taxon>
        <taxon>Epsilonproteobacteria</taxon>
        <taxon>Campylobacterales</taxon>
        <taxon>Helicobacteraceae</taxon>
        <taxon>Helicobacter</taxon>
    </lineage>
</organism>
<dbReference type="EMBL" id="AE001439">
    <property type="protein sequence ID" value="AAD06083.1"/>
    <property type="molecule type" value="Genomic_DNA"/>
</dbReference>
<dbReference type="KEGG" id="hpj:jhp_0507"/>
<dbReference type="Proteomes" id="UP000000804">
    <property type="component" value="Chromosome"/>
</dbReference>
<dbReference type="GO" id="GO:0016020">
    <property type="term" value="C:membrane"/>
    <property type="evidence" value="ECO:0007669"/>
    <property type="project" value="UniProtKB-SubCell"/>
</dbReference>
<reference key="1">
    <citation type="journal article" date="1999" name="Nature">
        <title>Genomic sequence comparison of two unrelated isolates of the human gastric pathogen Helicobacter pylori.</title>
        <authorList>
            <person name="Alm R.A."/>
            <person name="Ling L.-S.L."/>
            <person name="Moir D.T."/>
            <person name="King B.L."/>
            <person name="Brown E.D."/>
            <person name="Doig P.C."/>
            <person name="Smith D.R."/>
            <person name="Noonan B."/>
            <person name="Guild B.C."/>
            <person name="deJonge B.L."/>
            <person name="Carmel G."/>
            <person name="Tummino P.J."/>
            <person name="Caruso A."/>
            <person name="Uria-Nickelsen M."/>
            <person name="Mills D.M."/>
            <person name="Ives C."/>
            <person name="Gibson R."/>
            <person name="Merberg D."/>
            <person name="Mills S.D."/>
            <person name="Jiang Q."/>
            <person name="Taylor D.E."/>
            <person name="Vovis G.F."/>
            <person name="Trust T.J."/>
        </authorList>
    </citation>
    <scope>NUCLEOTIDE SEQUENCE [LARGE SCALE GENOMIC DNA]</scope>
    <source>
        <strain>J99 / ATCC 700824</strain>
    </source>
</reference>
<evidence type="ECO:0000255" key="1"/>
<evidence type="ECO:0000305" key="2"/>
<name>Y507_HELPJ</name>
<feature type="chain" id="PRO_0000128690" description="Uncharacterized protein jhp_0507">
    <location>
        <begin position="1"/>
        <end position="26"/>
    </location>
</feature>
<feature type="transmembrane region" description="Helical" evidence="1">
    <location>
        <begin position="3"/>
        <end position="23"/>
    </location>
</feature>